<dbReference type="EMBL" id="CP000822">
    <property type="protein sequence ID" value="ABV11433.1"/>
    <property type="molecule type" value="Genomic_DNA"/>
</dbReference>
<dbReference type="RefSeq" id="WP_012131264.1">
    <property type="nucleotide sequence ID" value="NC_009792.1"/>
</dbReference>
<dbReference type="SMR" id="A8AD70"/>
<dbReference type="STRING" id="290338.CKO_00269"/>
<dbReference type="GeneID" id="45134548"/>
<dbReference type="KEGG" id="cko:CKO_00269"/>
<dbReference type="HOGENOM" id="CLU_047530_3_1_6"/>
<dbReference type="OrthoDB" id="9790252at2"/>
<dbReference type="Proteomes" id="UP000008148">
    <property type="component" value="Chromosome"/>
</dbReference>
<dbReference type="GO" id="GO:0005886">
    <property type="term" value="C:plasma membrane"/>
    <property type="evidence" value="ECO:0007669"/>
    <property type="project" value="UniProtKB-SubCell"/>
</dbReference>
<dbReference type="GO" id="GO:0003677">
    <property type="term" value="F:DNA binding"/>
    <property type="evidence" value="ECO:0007669"/>
    <property type="project" value="UniProtKB-KW"/>
</dbReference>
<dbReference type="GO" id="GO:0008360">
    <property type="term" value="P:regulation of cell shape"/>
    <property type="evidence" value="ECO:0007669"/>
    <property type="project" value="UniProtKB-UniRule"/>
</dbReference>
<dbReference type="CDD" id="cd00093">
    <property type="entry name" value="HTH_XRE"/>
    <property type="match status" value="1"/>
</dbReference>
<dbReference type="FunFam" id="1.10.260.40:FF:000014">
    <property type="entry name" value="Cytoskeleton protein RodZ"/>
    <property type="match status" value="1"/>
</dbReference>
<dbReference type="Gene3D" id="1.10.260.40">
    <property type="entry name" value="lambda repressor-like DNA-binding domains"/>
    <property type="match status" value="1"/>
</dbReference>
<dbReference type="HAMAP" id="MF_02017">
    <property type="entry name" value="RodZ"/>
    <property type="match status" value="1"/>
</dbReference>
<dbReference type="InterPro" id="IPR050400">
    <property type="entry name" value="Bact_Cytoskel_RodZ"/>
</dbReference>
<dbReference type="InterPro" id="IPR001387">
    <property type="entry name" value="Cro/C1-type_HTH"/>
</dbReference>
<dbReference type="InterPro" id="IPR010982">
    <property type="entry name" value="Lambda_DNA-bd_dom_sf"/>
</dbReference>
<dbReference type="InterPro" id="IPR023690">
    <property type="entry name" value="RodZ"/>
</dbReference>
<dbReference type="InterPro" id="IPR025194">
    <property type="entry name" value="RodZ-like_C"/>
</dbReference>
<dbReference type="NCBIfam" id="NF008109">
    <property type="entry name" value="PRK10856.1"/>
    <property type="match status" value="1"/>
</dbReference>
<dbReference type="PANTHER" id="PTHR34475">
    <property type="match status" value="1"/>
</dbReference>
<dbReference type="PANTHER" id="PTHR34475:SF1">
    <property type="entry name" value="CYTOSKELETON PROTEIN RODZ"/>
    <property type="match status" value="1"/>
</dbReference>
<dbReference type="Pfam" id="PF13413">
    <property type="entry name" value="HTH_25"/>
    <property type="match status" value="1"/>
</dbReference>
<dbReference type="Pfam" id="PF13464">
    <property type="entry name" value="RodZ_C"/>
    <property type="match status" value="1"/>
</dbReference>
<dbReference type="SMART" id="SM00530">
    <property type="entry name" value="HTH_XRE"/>
    <property type="match status" value="1"/>
</dbReference>
<dbReference type="SUPFAM" id="SSF47413">
    <property type="entry name" value="lambda repressor-like DNA-binding domains"/>
    <property type="match status" value="1"/>
</dbReference>
<dbReference type="PROSITE" id="PS50943">
    <property type="entry name" value="HTH_CROC1"/>
    <property type="match status" value="1"/>
</dbReference>
<sequence>MNTEATHDQNEAQSTGVRLRNAREQLGLSQQAVAERLCLKVSTVRDIEEDKAPADLASTFLRGYIRSYARLVHIPEEELLPGLEKQAPVRPSKVAPMQSFSLGKRRKKRDGWLMTFTWLVLFVVVGLTGAWWWQNHKAQQEELTTMVDQSSAELNAGGDSAQSVPLDTSEAASQDSTPAPTAPVDSTATNAVPQTPDASATTTAPAADAQQNAVVAPSQANVDTATTAPAATGDTASLPTDQAGVATSAVDQNALVMNFTADCWLEVTDATGKKLFSGMQRKDGNLNLTGQAPYKLKIGAPAAVQIQYQGKPVDLSRFIRTNQVARLTLNAEQSPAQ</sequence>
<gene>
    <name evidence="1" type="primary">rodZ</name>
    <name type="ordered locus">CKO_00269</name>
</gene>
<reference key="1">
    <citation type="submission" date="2007-08" db="EMBL/GenBank/DDBJ databases">
        <authorList>
            <consortium name="The Citrobacter koseri Genome Sequencing Project"/>
            <person name="McClelland M."/>
            <person name="Sanderson E.K."/>
            <person name="Porwollik S."/>
            <person name="Spieth J."/>
            <person name="Clifton W.S."/>
            <person name="Latreille P."/>
            <person name="Courtney L."/>
            <person name="Wang C."/>
            <person name="Pepin K."/>
            <person name="Bhonagiri V."/>
            <person name="Nash W."/>
            <person name="Johnson M."/>
            <person name="Thiruvilangam P."/>
            <person name="Wilson R."/>
        </authorList>
    </citation>
    <scope>NUCLEOTIDE SEQUENCE [LARGE SCALE GENOMIC DNA]</scope>
    <source>
        <strain>ATCC BAA-895 / CDC 4225-83 / SGSC4696</strain>
    </source>
</reference>
<protein>
    <recommendedName>
        <fullName evidence="1">Cytoskeleton protein RodZ</fullName>
    </recommendedName>
</protein>
<evidence type="ECO:0000255" key="1">
    <source>
        <dbReference type="HAMAP-Rule" id="MF_02017"/>
    </source>
</evidence>
<evidence type="ECO:0000256" key="2">
    <source>
        <dbReference type="SAM" id="MobiDB-lite"/>
    </source>
</evidence>
<comment type="function">
    <text evidence="1">Cytoskeletal protein that is involved in cell-shape control through regulation of the length of the long axis.</text>
</comment>
<comment type="subcellular location">
    <subcellularLocation>
        <location evidence="1">Cell inner membrane</location>
        <topology evidence="1">Single-pass type II membrane protein</topology>
    </subcellularLocation>
    <text evidence="1">Forms helical filaments along the long axis of the cell.</text>
</comment>
<comment type="domain">
    <text evidence="1">The helix-turn-helix (HTH) motif in the cytoplasmic domain of the N-terminus is involved in the formation of spirals to maintain the rigid rod shape. As this protein is anchored in the cytoplasmic membrane, the HTH motif may contribute to protein-protein interactions to form the RodZ helix, which is localized beneath the cytoplasmic membrane. The C-terminal domain may be critical for determination of the rod shape by probably interacting with enzymes required for synthesis of the peptidoglycan layer, including PBPs in the periplasm.</text>
</comment>
<comment type="similarity">
    <text evidence="1">Belongs to the RodZ family.</text>
</comment>
<keyword id="KW-0997">Cell inner membrane</keyword>
<keyword id="KW-1003">Cell membrane</keyword>
<keyword id="KW-0133">Cell shape</keyword>
<keyword id="KW-0238">DNA-binding</keyword>
<keyword id="KW-0472">Membrane</keyword>
<keyword id="KW-1185">Reference proteome</keyword>
<keyword id="KW-0735">Signal-anchor</keyword>
<keyword id="KW-0812">Transmembrane</keyword>
<keyword id="KW-1133">Transmembrane helix</keyword>
<name>RODZ_CITK8</name>
<organism>
    <name type="scientific">Citrobacter koseri (strain ATCC BAA-895 / CDC 4225-83 / SGSC4696)</name>
    <dbReference type="NCBI Taxonomy" id="290338"/>
    <lineage>
        <taxon>Bacteria</taxon>
        <taxon>Pseudomonadati</taxon>
        <taxon>Pseudomonadota</taxon>
        <taxon>Gammaproteobacteria</taxon>
        <taxon>Enterobacterales</taxon>
        <taxon>Enterobacteriaceae</taxon>
        <taxon>Citrobacter</taxon>
    </lineage>
</organism>
<proteinExistence type="inferred from homology"/>
<feature type="chain" id="PRO_0000361829" description="Cytoskeleton protein RodZ">
    <location>
        <begin position="1"/>
        <end position="337"/>
    </location>
</feature>
<feature type="topological domain" description="Cytoplasmic" evidence="1">
    <location>
        <begin position="1"/>
        <end position="111"/>
    </location>
</feature>
<feature type="transmembrane region" description="Helical; Signal-anchor for type II membrane protein" evidence="1">
    <location>
        <begin position="112"/>
        <end position="132"/>
    </location>
</feature>
<feature type="topological domain" description="Periplasmic" evidence="1">
    <location>
        <begin position="133"/>
        <end position="337"/>
    </location>
</feature>
<feature type="domain" description="HTH cro/C1-type" evidence="1">
    <location>
        <begin position="19"/>
        <end position="71"/>
    </location>
</feature>
<feature type="DNA-binding region" description="H-T-H motif" evidence="1">
    <location>
        <begin position="30"/>
        <end position="49"/>
    </location>
</feature>
<feature type="region of interest" description="Disordered" evidence="2">
    <location>
        <begin position="155"/>
        <end position="220"/>
    </location>
</feature>
<feature type="compositionally biased region" description="Polar residues" evidence="2">
    <location>
        <begin position="160"/>
        <end position="192"/>
    </location>
</feature>
<feature type="compositionally biased region" description="Low complexity" evidence="2">
    <location>
        <begin position="193"/>
        <end position="217"/>
    </location>
</feature>
<accession>A8AD70</accession>